<reference key="1">
    <citation type="journal article" date="1998" name="Nature">
        <title>The complete genome of the hyperthermophilic bacterium Aquifex aeolicus.</title>
        <authorList>
            <person name="Deckert G."/>
            <person name="Warren P.V."/>
            <person name="Gaasterland T."/>
            <person name="Young W.G."/>
            <person name="Lenox A.L."/>
            <person name="Graham D.E."/>
            <person name="Overbeek R."/>
            <person name="Snead M.A."/>
            <person name="Keller M."/>
            <person name="Aujay M."/>
            <person name="Huber R."/>
            <person name="Feldman R.A."/>
            <person name="Short J.M."/>
            <person name="Olsen G.J."/>
            <person name="Swanson R.V."/>
        </authorList>
    </citation>
    <scope>NUCLEOTIDE SEQUENCE [LARGE SCALE GENOMIC DNA]</scope>
    <source>
        <strain>VF5</strain>
    </source>
</reference>
<protein>
    <recommendedName>
        <fullName evidence="1">Argininosuccinate lyase</fullName>
        <shortName evidence="1">ASAL</shortName>
        <ecNumber evidence="1">4.3.2.1</ecNumber>
    </recommendedName>
    <alternativeName>
        <fullName evidence="1">Arginosuccinase</fullName>
    </alternativeName>
</protein>
<dbReference type="EC" id="4.3.2.1" evidence="1"/>
<dbReference type="EMBL" id="AE000657">
    <property type="protein sequence ID" value="AAC07341.1"/>
    <property type="molecule type" value="Genomic_DNA"/>
</dbReference>
<dbReference type="PIR" id="D70419">
    <property type="entry name" value="D70419"/>
</dbReference>
<dbReference type="RefSeq" id="NP_213947.1">
    <property type="nucleotide sequence ID" value="NC_000918.1"/>
</dbReference>
<dbReference type="RefSeq" id="WP_010880885.1">
    <property type="nucleotide sequence ID" value="NC_000918.1"/>
</dbReference>
<dbReference type="SMR" id="O67383"/>
<dbReference type="FunCoup" id="O67383">
    <property type="interactions" value="402"/>
</dbReference>
<dbReference type="STRING" id="224324.aq_1372"/>
<dbReference type="EnsemblBacteria" id="AAC07341">
    <property type="protein sequence ID" value="AAC07341"/>
    <property type="gene ID" value="aq_1372"/>
</dbReference>
<dbReference type="KEGG" id="aae:aq_1372"/>
<dbReference type="PATRIC" id="fig|224324.8.peg.1074"/>
<dbReference type="eggNOG" id="COG0165">
    <property type="taxonomic scope" value="Bacteria"/>
</dbReference>
<dbReference type="HOGENOM" id="CLU_027272_2_3_0"/>
<dbReference type="InParanoid" id="O67383"/>
<dbReference type="OrthoDB" id="9769623at2"/>
<dbReference type="UniPathway" id="UPA00068">
    <property type="reaction ID" value="UER00114"/>
</dbReference>
<dbReference type="Proteomes" id="UP000000798">
    <property type="component" value="Chromosome"/>
</dbReference>
<dbReference type="GO" id="GO:0005829">
    <property type="term" value="C:cytosol"/>
    <property type="evidence" value="ECO:0000318"/>
    <property type="project" value="GO_Central"/>
</dbReference>
<dbReference type="GO" id="GO:0004056">
    <property type="term" value="F:argininosuccinate lyase activity"/>
    <property type="evidence" value="ECO:0000318"/>
    <property type="project" value="GO_Central"/>
</dbReference>
<dbReference type="GO" id="GO:0042450">
    <property type="term" value="P:arginine biosynthetic process via ornithine"/>
    <property type="evidence" value="ECO:0000318"/>
    <property type="project" value="GO_Central"/>
</dbReference>
<dbReference type="GO" id="GO:0006526">
    <property type="term" value="P:L-arginine biosynthetic process"/>
    <property type="evidence" value="ECO:0007669"/>
    <property type="project" value="UniProtKB-UniRule"/>
</dbReference>
<dbReference type="CDD" id="cd01359">
    <property type="entry name" value="Argininosuccinate_lyase"/>
    <property type="match status" value="1"/>
</dbReference>
<dbReference type="FunFam" id="1.10.275.10:FF:000002">
    <property type="entry name" value="Argininosuccinate lyase"/>
    <property type="match status" value="1"/>
</dbReference>
<dbReference type="FunFam" id="1.10.40.30:FF:000001">
    <property type="entry name" value="Argininosuccinate lyase"/>
    <property type="match status" value="1"/>
</dbReference>
<dbReference type="FunFam" id="1.20.200.10:FF:000015">
    <property type="entry name" value="argininosuccinate lyase isoform X2"/>
    <property type="match status" value="1"/>
</dbReference>
<dbReference type="Gene3D" id="1.10.40.30">
    <property type="entry name" value="Fumarase/aspartase (C-terminal domain)"/>
    <property type="match status" value="1"/>
</dbReference>
<dbReference type="Gene3D" id="1.20.200.10">
    <property type="entry name" value="Fumarase/aspartase (Central domain)"/>
    <property type="match status" value="1"/>
</dbReference>
<dbReference type="Gene3D" id="1.10.275.10">
    <property type="entry name" value="Fumarase/aspartase (N-terminal domain)"/>
    <property type="match status" value="1"/>
</dbReference>
<dbReference type="HAMAP" id="MF_00006">
    <property type="entry name" value="Arg_succ_lyase"/>
    <property type="match status" value="1"/>
</dbReference>
<dbReference type="InterPro" id="IPR029419">
    <property type="entry name" value="Arg_succ_lyase_C"/>
</dbReference>
<dbReference type="InterPro" id="IPR009049">
    <property type="entry name" value="Argininosuccinate_lyase"/>
</dbReference>
<dbReference type="InterPro" id="IPR024083">
    <property type="entry name" value="Fumarase/histidase_N"/>
</dbReference>
<dbReference type="InterPro" id="IPR020557">
    <property type="entry name" value="Fumarate_lyase_CS"/>
</dbReference>
<dbReference type="InterPro" id="IPR000362">
    <property type="entry name" value="Fumarate_lyase_fam"/>
</dbReference>
<dbReference type="InterPro" id="IPR022761">
    <property type="entry name" value="Fumarate_lyase_N"/>
</dbReference>
<dbReference type="InterPro" id="IPR008948">
    <property type="entry name" value="L-Aspartase-like"/>
</dbReference>
<dbReference type="NCBIfam" id="TIGR00838">
    <property type="entry name" value="argH"/>
    <property type="match status" value="1"/>
</dbReference>
<dbReference type="PANTHER" id="PTHR43814">
    <property type="entry name" value="ARGININOSUCCINATE LYASE"/>
    <property type="match status" value="1"/>
</dbReference>
<dbReference type="PANTHER" id="PTHR43814:SF1">
    <property type="entry name" value="ARGININOSUCCINATE LYASE"/>
    <property type="match status" value="1"/>
</dbReference>
<dbReference type="Pfam" id="PF14698">
    <property type="entry name" value="ASL_C2"/>
    <property type="match status" value="1"/>
</dbReference>
<dbReference type="Pfam" id="PF00206">
    <property type="entry name" value="Lyase_1"/>
    <property type="match status" value="1"/>
</dbReference>
<dbReference type="PRINTS" id="PR00145">
    <property type="entry name" value="ARGSUCLYASE"/>
</dbReference>
<dbReference type="PRINTS" id="PR00149">
    <property type="entry name" value="FUMRATELYASE"/>
</dbReference>
<dbReference type="SUPFAM" id="SSF48557">
    <property type="entry name" value="L-aspartase-like"/>
    <property type="match status" value="1"/>
</dbReference>
<dbReference type="PROSITE" id="PS00163">
    <property type="entry name" value="FUMARATE_LYASES"/>
    <property type="match status" value="1"/>
</dbReference>
<proteinExistence type="inferred from homology"/>
<feature type="chain" id="PRO_0000137733" description="Argininosuccinate lyase">
    <location>
        <begin position="1"/>
        <end position="457"/>
    </location>
</feature>
<comment type="catalytic activity">
    <reaction evidence="1">
        <text>2-(N(omega)-L-arginino)succinate = fumarate + L-arginine</text>
        <dbReference type="Rhea" id="RHEA:24020"/>
        <dbReference type="ChEBI" id="CHEBI:29806"/>
        <dbReference type="ChEBI" id="CHEBI:32682"/>
        <dbReference type="ChEBI" id="CHEBI:57472"/>
        <dbReference type="EC" id="4.3.2.1"/>
    </reaction>
</comment>
<comment type="pathway">
    <text evidence="1">Amino-acid biosynthesis; L-arginine biosynthesis; L-arginine from L-ornithine and carbamoyl phosphate: step 3/3.</text>
</comment>
<comment type="subcellular location">
    <subcellularLocation>
        <location evidence="1">Cytoplasm</location>
    </subcellularLocation>
</comment>
<comment type="similarity">
    <text evidence="1">Belongs to the lyase 1 family. Argininosuccinate lyase subfamily.</text>
</comment>
<organism>
    <name type="scientific">Aquifex aeolicus (strain VF5)</name>
    <dbReference type="NCBI Taxonomy" id="224324"/>
    <lineage>
        <taxon>Bacteria</taxon>
        <taxon>Pseudomonadati</taxon>
        <taxon>Aquificota</taxon>
        <taxon>Aquificia</taxon>
        <taxon>Aquificales</taxon>
        <taxon>Aquificaceae</taxon>
        <taxon>Aquifex</taxon>
    </lineage>
</organism>
<evidence type="ECO:0000255" key="1">
    <source>
        <dbReference type="HAMAP-Rule" id="MF_00006"/>
    </source>
</evidence>
<keyword id="KW-0028">Amino-acid biosynthesis</keyword>
<keyword id="KW-0055">Arginine biosynthesis</keyword>
<keyword id="KW-0963">Cytoplasm</keyword>
<keyword id="KW-0456">Lyase</keyword>
<keyword id="KW-1185">Reference proteome</keyword>
<sequence>MEKPWSGRFKEETDKFVEDFTESVSFDKELAFEDIEQDIAHVKTLQKAGILTEEEARELIQELLKIKEEIKEGKFQWKKELEDVHMNIEAELINRLGDVGRKLHTARSRNDQVATDEKLYLKKEIKEVLQLLKELRKTLVELAETTVDFVMPSYTHLQRAQPIRVAHYFLAYREILLKDSERLMDTYRRVDELPLGSGAVAGVDFPLDRFYTAELLGFNRVTRNSMYATAERDFIIEFLSNCALIAQHLSRLAEDLIIWNTEEFNFVELPDKLCTGSSIMPQKKNPDVLELIRGKTGRIYGNLIALLTTMKALPMAYNRDMQEDKEPLFDTLKNLKNMIKGMTLVLSDLRVKEQNMRKASGNFLLITDIANYLVEKGVPFRTAHHIAGSIVAYLLEKGKKLEEMTLEEFKQFSEKFEEDVFDILSPERAADRKRVYGGTAKEEILRIIEVAKAEEGL</sequence>
<accession>O67383</accession>
<gene>
    <name evidence="1" type="primary">argH</name>
    <name type="ordered locus">aq_1372</name>
</gene>
<name>ARLY_AQUAE</name>